<proteinExistence type="inferred from homology"/>
<sequence>MTIKLIVGLANPGAEYAATRHNAGAWFVDLLAERLRAPLREEAKFFGYTSRVTLGGEDVRLLVPTTFMNLSGKAVAAMASFFRINPDEILVAHDELDLPPGVAKLKLGGGHGGHNGLKDIISKLGNNPNFHRLRIGIGHPGDKNKVVGFVLGKPPVSEQKLIDEAIDEAARCTEMWFTDGLTKATNRLHAFKAQ</sequence>
<organism>
    <name type="scientific">Shigella boydii serotype 18 (strain CDC 3083-94 / BS512)</name>
    <dbReference type="NCBI Taxonomy" id="344609"/>
    <lineage>
        <taxon>Bacteria</taxon>
        <taxon>Pseudomonadati</taxon>
        <taxon>Pseudomonadota</taxon>
        <taxon>Gammaproteobacteria</taxon>
        <taxon>Enterobacterales</taxon>
        <taxon>Enterobacteriaceae</taxon>
        <taxon>Shigella</taxon>
    </lineage>
</organism>
<keyword id="KW-0963">Cytoplasm</keyword>
<keyword id="KW-0378">Hydrolase</keyword>
<keyword id="KW-1185">Reference proteome</keyword>
<keyword id="KW-0694">RNA-binding</keyword>
<keyword id="KW-0820">tRNA-binding</keyword>
<protein>
    <recommendedName>
        <fullName evidence="1">Peptidyl-tRNA hydrolase</fullName>
        <shortName evidence="1">Pth</shortName>
        <ecNumber evidence="1">3.1.1.29</ecNumber>
    </recommendedName>
</protein>
<dbReference type="EC" id="3.1.1.29" evidence="1"/>
<dbReference type="EMBL" id="CP001063">
    <property type="protein sequence ID" value="ACD09264.1"/>
    <property type="molecule type" value="Genomic_DNA"/>
</dbReference>
<dbReference type="RefSeq" id="WP_000152941.1">
    <property type="nucleotide sequence ID" value="NC_010658.1"/>
</dbReference>
<dbReference type="SMR" id="B2TZV2"/>
<dbReference type="STRING" id="344609.SbBS512_E1368"/>
<dbReference type="KEGG" id="sbc:SbBS512_E1368"/>
<dbReference type="HOGENOM" id="CLU_062456_3_1_6"/>
<dbReference type="Proteomes" id="UP000001030">
    <property type="component" value="Chromosome"/>
</dbReference>
<dbReference type="GO" id="GO:0005737">
    <property type="term" value="C:cytoplasm"/>
    <property type="evidence" value="ECO:0007669"/>
    <property type="project" value="UniProtKB-SubCell"/>
</dbReference>
<dbReference type="GO" id="GO:0004045">
    <property type="term" value="F:peptidyl-tRNA hydrolase activity"/>
    <property type="evidence" value="ECO:0007669"/>
    <property type="project" value="UniProtKB-UniRule"/>
</dbReference>
<dbReference type="GO" id="GO:0000049">
    <property type="term" value="F:tRNA binding"/>
    <property type="evidence" value="ECO:0007669"/>
    <property type="project" value="UniProtKB-UniRule"/>
</dbReference>
<dbReference type="GO" id="GO:0006515">
    <property type="term" value="P:protein quality control for misfolded or incompletely synthesized proteins"/>
    <property type="evidence" value="ECO:0007669"/>
    <property type="project" value="UniProtKB-UniRule"/>
</dbReference>
<dbReference type="GO" id="GO:0072344">
    <property type="term" value="P:rescue of stalled ribosome"/>
    <property type="evidence" value="ECO:0007669"/>
    <property type="project" value="UniProtKB-UniRule"/>
</dbReference>
<dbReference type="CDD" id="cd00462">
    <property type="entry name" value="PTH"/>
    <property type="match status" value="1"/>
</dbReference>
<dbReference type="FunFam" id="3.40.50.1470:FF:000001">
    <property type="entry name" value="Peptidyl-tRNA hydrolase"/>
    <property type="match status" value="1"/>
</dbReference>
<dbReference type="Gene3D" id="3.40.50.1470">
    <property type="entry name" value="Peptidyl-tRNA hydrolase"/>
    <property type="match status" value="1"/>
</dbReference>
<dbReference type="HAMAP" id="MF_00083">
    <property type="entry name" value="Pept_tRNA_hydro_bact"/>
    <property type="match status" value="1"/>
</dbReference>
<dbReference type="InterPro" id="IPR001328">
    <property type="entry name" value="Pept_tRNA_hydro"/>
</dbReference>
<dbReference type="InterPro" id="IPR018171">
    <property type="entry name" value="Pept_tRNA_hydro_CS"/>
</dbReference>
<dbReference type="InterPro" id="IPR036416">
    <property type="entry name" value="Pept_tRNA_hydro_sf"/>
</dbReference>
<dbReference type="NCBIfam" id="TIGR00447">
    <property type="entry name" value="pth"/>
    <property type="match status" value="1"/>
</dbReference>
<dbReference type="PANTHER" id="PTHR17224">
    <property type="entry name" value="PEPTIDYL-TRNA HYDROLASE"/>
    <property type="match status" value="1"/>
</dbReference>
<dbReference type="PANTHER" id="PTHR17224:SF1">
    <property type="entry name" value="PEPTIDYL-TRNA HYDROLASE"/>
    <property type="match status" value="1"/>
</dbReference>
<dbReference type="Pfam" id="PF01195">
    <property type="entry name" value="Pept_tRNA_hydro"/>
    <property type="match status" value="1"/>
</dbReference>
<dbReference type="SUPFAM" id="SSF53178">
    <property type="entry name" value="Peptidyl-tRNA hydrolase-like"/>
    <property type="match status" value="1"/>
</dbReference>
<dbReference type="PROSITE" id="PS01195">
    <property type="entry name" value="PEPT_TRNA_HYDROL_1"/>
    <property type="match status" value="1"/>
</dbReference>
<dbReference type="PROSITE" id="PS01196">
    <property type="entry name" value="PEPT_TRNA_HYDROL_2"/>
    <property type="match status" value="1"/>
</dbReference>
<reference key="1">
    <citation type="submission" date="2008-05" db="EMBL/GenBank/DDBJ databases">
        <title>Complete sequence of Shigella boydii serotype 18 strain BS512.</title>
        <authorList>
            <person name="Rasko D.A."/>
            <person name="Rosovitz M."/>
            <person name="Maurelli A.T."/>
            <person name="Myers G."/>
            <person name="Seshadri R."/>
            <person name="Cer R."/>
            <person name="Jiang L."/>
            <person name="Ravel J."/>
            <person name="Sebastian Y."/>
        </authorList>
    </citation>
    <scope>NUCLEOTIDE SEQUENCE [LARGE SCALE GENOMIC DNA]</scope>
    <source>
        <strain>CDC 3083-94 / BS512</strain>
    </source>
</reference>
<gene>
    <name evidence="1" type="primary">pth</name>
    <name type="ordered locus">SbBS512_E1368</name>
</gene>
<comment type="function">
    <text evidence="1">Hydrolyzes ribosome-free peptidyl-tRNAs (with 1 or more amino acids incorporated), which drop off the ribosome during protein synthesis, or as a result of ribosome stalling.</text>
</comment>
<comment type="function">
    <text evidence="1">Catalyzes the release of premature peptidyl moieties from peptidyl-tRNA molecules trapped in stalled 50S ribosomal subunits, and thus maintains levels of free tRNAs and 50S ribosomes.</text>
</comment>
<comment type="catalytic activity">
    <reaction evidence="1">
        <text>an N-acyl-L-alpha-aminoacyl-tRNA + H2O = an N-acyl-L-amino acid + a tRNA + H(+)</text>
        <dbReference type="Rhea" id="RHEA:54448"/>
        <dbReference type="Rhea" id="RHEA-COMP:10123"/>
        <dbReference type="Rhea" id="RHEA-COMP:13883"/>
        <dbReference type="ChEBI" id="CHEBI:15377"/>
        <dbReference type="ChEBI" id="CHEBI:15378"/>
        <dbReference type="ChEBI" id="CHEBI:59874"/>
        <dbReference type="ChEBI" id="CHEBI:78442"/>
        <dbReference type="ChEBI" id="CHEBI:138191"/>
        <dbReference type="EC" id="3.1.1.29"/>
    </reaction>
</comment>
<comment type="subunit">
    <text evidence="1">Monomer.</text>
</comment>
<comment type="subcellular location">
    <subcellularLocation>
        <location evidence="1">Cytoplasm</location>
    </subcellularLocation>
</comment>
<comment type="similarity">
    <text evidence="1">Belongs to the PTH family.</text>
</comment>
<name>PTH_SHIB3</name>
<feature type="chain" id="PRO_1000092986" description="Peptidyl-tRNA hydrolase">
    <location>
        <begin position="1"/>
        <end position="194"/>
    </location>
</feature>
<feature type="active site" description="Proton acceptor" evidence="1">
    <location>
        <position position="21"/>
    </location>
</feature>
<feature type="binding site" evidence="1">
    <location>
        <position position="16"/>
    </location>
    <ligand>
        <name>tRNA</name>
        <dbReference type="ChEBI" id="CHEBI:17843"/>
    </ligand>
</feature>
<feature type="binding site" evidence="1">
    <location>
        <position position="67"/>
    </location>
    <ligand>
        <name>tRNA</name>
        <dbReference type="ChEBI" id="CHEBI:17843"/>
    </ligand>
</feature>
<feature type="binding site" evidence="1">
    <location>
        <position position="69"/>
    </location>
    <ligand>
        <name>tRNA</name>
        <dbReference type="ChEBI" id="CHEBI:17843"/>
    </ligand>
</feature>
<feature type="binding site" evidence="1">
    <location>
        <position position="115"/>
    </location>
    <ligand>
        <name>tRNA</name>
        <dbReference type="ChEBI" id="CHEBI:17843"/>
    </ligand>
</feature>
<feature type="site" description="Discriminates between blocked and unblocked aminoacyl-tRNA" evidence="1">
    <location>
        <position position="11"/>
    </location>
</feature>
<feature type="site" description="Stabilizes the basic form of H active site to accept a proton" evidence="1">
    <location>
        <position position="94"/>
    </location>
</feature>
<evidence type="ECO:0000255" key="1">
    <source>
        <dbReference type="HAMAP-Rule" id="MF_00083"/>
    </source>
</evidence>
<accession>B2TZV2</accession>